<reference key="1">
    <citation type="journal article" date="2006" name="Proc. Natl. Acad. Sci. U.S.A.">
        <title>The complete genome sequence of Lactobacillus bulgaricus reveals extensive and ongoing reductive evolution.</title>
        <authorList>
            <person name="van de Guchte M."/>
            <person name="Penaud S."/>
            <person name="Grimaldi C."/>
            <person name="Barbe V."/>
            <person name="Bryson K."/>
            <person name="Nicolas P."/>
            <person name="Robert C."/>
            <person name="Oztas S."/>
            <person name="Mangenot S."/>
            <person name="Couloux A."/>
            <person name="Loux V."/>
            <person name="Dervyn R."/>
            <person name="Bossy R."/>
            <person name="Bolotin A."/>
            <person name="Batto J.-M."/>
            <person name="Walunas T."/>
            <person name="Gibrat J.-F."/>
            <person name="Bessieres P."/>
            <person name="Weissenbach J."/>
            <person name="Ehrlich S.D."/>
            <person name="Maguin E."/>
        </authorList>
    </citation>
    <scope>NUCLEOTIDE SEQUENCE [LARGE SCALE GENOMIC DNA]</scope>
    <source>
        <strain>ATCC 11842 / DSM 20081 / BCRC 10696 / JCM 1002 / NBRC 13953 / NCIMB 11778 / NCTC 12712 / WDCM 00102 / Lb 14</strain>
    </source>
</reference>
<evidence type="ECO:0000255" key="1">
    <source>
        <dbReference type="HAMAP-Rule" id="MF_01539"/>
    </source>
</evidence>
<comment type="function">
    <text evidence="1">Catalyzes the formation of N(4)-acetylcytidine (ac(4)C) at the wobble position of elongator tRNA(Met), using acetate and ATP as substrates. First activates an acetate ion to form acetyladenylate (Ac-AMP) and then transfers the acetyl group to tRNA to form ac(4)C34.</text>
</comment>
<comment type="catalytic activity">
    <reaction evidence="1">
        <text>cytidine(34) in elongator tRNA(Met) + acetate + ATP = N(4)-acetylcytidine(34) in elongator tRNA(Met) + AMP + diphosphate</text>
        <dbReference type="Rhea" id="RHEA:58144"/>
        <dbReference type="Rhea" id="RHEA-COMP:10693"/>
        <dbReference type="Rhea" id="RHEA-COMP:10694"/>
        <dbReference type="ChEBI" id="CHEBI:30089"/>
        <dbReference type="ChEBI" id="CHEBI:30616"/>
        <dbReference type="ChEBI" id="CHEBI:33019"/>
        <dbReference type="ChEBI" id="CHEBI:74900"/>
        <dbReference type="ChEBI" id="CHEBI:82748"/>
        <dbReference type="ChEBI" id="CHEBI:456215"/>
    </reaction>
</comment>
<comment type="subcellular location">
    <subcellularLocation>
        <location evidence="1">Cytoplasm</location>
    </subcellularLocation>
</comment>
<comment type="similarity">
    <text evidence="1">Belongs to the TmcAL family.</text>
</comment>
<gene>
    <name evidence="1" type="primary">tmcAL</name>
    <name type="ordered locus">Ldb1495</name>
</gene>
<proteinExistence type="inferred from homology"/>
<sequence>MSVVGIVAEYNPFHSGHEFLMNQARLIAGDDPIIAVMSGNYVQRGEMAILDKWSRARSAIEAGADLVFELPFSYAVQAADMFATGGVDLLTRLGAKNLVFGVEDANLNFEYFGDRISKIPRQRQEFADYSQTYSTQYNQMVAREIGHEVSEPNAILGLAYAVANANLGSPLKLSPVNRVGAGHDEILQREAVVQSASAIRNLLLNGAERSELEQWLPKGEIAAFDQEKVLPNWELLFPFLKYRLESASIKELQQIYQMSEGLEYKFKAEIHLAENFADFLRRVKSKRYTYSRLRRLSLYTLLNVTEADVLNSYDHVSTMLLAYSKRGRKYLKQQRKDFEIDIVSKVDRKNAQEGTLGLKVRVDRLFEQIVGADQNFGRRPLEVN</sequence>
<feature type="chain" id="PRO_0000300173" description="tRNA(Met) cytidine acetate ligase">
    <location>
        <begin position="1"/>
        <end position="384"/>
    </location>
</feature>
<feature type="binding site" evidence="1">
    <location>
        <begin position="7"/>
        <end position="20"/>
    </location>
    <ligand>
        <name>ATP</name>
        <dbReference type="ChEBI" id="CHEBI:30616"/>
    </ligand>
</feature>
<feature type="binding site" evidence="1">
    <location>
        <position position="101"/>
    </location>
    <ligand>
        <name>ATP</name>
        <dbReference type="ChEBI" id="CHEBI:30616"/>
    </ligand>
</feature>
<feature type="binding site" evidence="1">
    <location>
        <position position="153"/>
    </location>
    <ligand>
        <name>ATP</name>
        <dbReference type="ChEBI" id="CHEBI:30616"/>
    </ligand>
</feature>
<feature type="binding site" evidence="1">
    <location>
        <position position="178"/>
    </location>
    <ligand>
        <name>ATP</name>
        <dbReference type="ChEBI" id="CHEBI:30616"/>
    </ligand>
</feature>
<accession>Q1G9B9</accession>
<organism>
    <name type="scientific">Lactobacillus delbrueckii subsp. bulgaricus (strain ATCC 11842 / DSM 20081 / BCRC 10696 / JCM 1002 / NBRC 13953 / NCIMB 11778 / NCTC 12712 / WDCM 00102 / Lb 14)</name>
    <dbReference type="NCBI Taxonomy" id="390333"/>
    <lineage>
        <taxon>Bacteria</taxon>
        <taxon>Bacillati</taxon>
        <taxon>Bacillota</taxon>
        <taxon>Bacilli</taxon>
        <taxon>Lactobacillales</taxon>
        <taxon>Lactobacillaceae</taxon>
        <taxon>Lactobacillus</taxon>
    </lineage>
</organism>
<name>TMCAL_LACDA</name>
<dbReference type="EC" id="6.3.4.-" evidence="1"/>
<dbReference type="EMBL" id="CR954253">
    <property type="protein sequence ID" value="CAI98295.1"/>
    <property type="molecule type" value="Genomic_DNA"/>
</dbReference>
<dbReference type="RefSeq" id="WP_011544076.1">
    <property type="nucleotide sequence ID" value="NC_008054.1"/>
</dbReference>
<dbReference type="SMR" id="Q1G9B9"/>
<dbReference type="STRING" id="390333.Ldb1495"/>
<dbReference type="KEGG" id="ldb:Ldb1495"/>
<dbReference type="PATRIC" id="fig|390333.13.peg.713"/>
<dbReference type="eggNOG" id="COG1323">
    <property type="taxonomic scope" value="Bacteria"/>
</dbReference>
<dbReference type="HOGENOM" id="CLU_038915_0_2_9"/>
<dbReference type="BioCyc" id="LDEL390333:LDB_RS06435-MONOMER"/>
<dbReference type="Proteomes" id="UP000001259">
    <property type="component" value="Chromosome"/>
</dbReference>
<dbReference type="GO" id="GO:0005737">
    <property type="term" value="C:cytoplasm"/>
    <property type="evidence" value="ECO:0007669"/>
    <property type="project" value="UniProtKB-SubCell"/>
</dbReference>
<dbReference type="GO" id="GO:0005524">
    <property type="term" value="F:ATP binding"/>
    <property type="evidence" value="ECO:0007669"/>
    <property type="project" value="UniProtKB-KW"/>
</dbReference>
<dbReference type="GO" id="GO:0016879">
    <property type="term" value="F:ligase activity, forming carbon-nitrogen bonds"/>
    <property type="evidence" value="ECO:0007669"/>
    <property type="project" value="UniProtKB-UniRule"/>
</dbReference>
<dbReference type="GO" id="GO:0000049">
    <property type="term" value="F:tRNA binding"/>
    <property type="evidence" value="ECO:0007669"/>
    <property type="project" value="UniProtKB-KW"/>
</dbReference>
<dbReference type="GO" id="GO:0006400">
    <property type="term" value="P:tRNA modification"/>
    <property type="evidence" value="ECO:0007669"/>
    <property type="project" value="UniProtKB-UniRule"/>
</dbReference>
<dbReference type="Gene3D" id="3.40.50.620">
    <property type="entry name" value="HUPs"/>
    <property type="match status" value="1"/>
</dbReference>
<dbReference type="HAMAP" id="MF_01539">
    <property type="entry name" value="TmcAL"/>
    <property type="match status" value="1"/>
</dbReference>
<dbReference type="InterPro" id="IPR014729">
    <property type="entry name" value="Rossmann-like_a/b/a_fold"/>
</dbReference>
<dbReference type="InterPro" id="IPR008513">
    <property type="entry name" value="tRNA(Met)_cyd_acetate_ligase"/>
</dbReference>
<dbReference type="NCBIfam" id="NF010191">
    <property type="entry name" value="PRK13670.1"/>
    <property type="match status" value="1"/>
</dbReference>
<dbReference type="PANTHER" id="PTHR37825">
    <property type="entry name" value="TRNA(MET) CYTIDINE ACETATE LIGASE"/>
    <property type="match status" value="1"/>
</dbReference>
<dbReference type="PANTHER" id="PTHR37825:SF1">
    <property type="entry name" value="TRNA(MET) CYTIDINE ACETATE LIGASE"/>
    <property type="match status" value="1"/>
</dbReference>
<dbReference type="Pfam" id="PF05636">
    <property type="entry name" value="HIGH_NTase1"/>
    <property type="match status" value="1"/>
</dbReference>
<dbReference type="SUPFAM" id="SSF52374">
    <property type="entry name" value="Nucleotidylyl transferase"/>
    <property type="match status" value="1"/>
</dbReference>
<keyword id="KW-0067">ATP-binding</keyword>
<keyword id="KW-0963">Cytoplasm</keyword>
<keyword id="KW-0436">Ligase</keyword>
<keyword id="KW-0547">Nucleotide-binding</keyword>
<keyword id="KW-1185">Reference proteome</keyword>
<keyword id="KW-0694">RNA-binding</keyword>
<keyword id="KW-0819">tRNA processing</keyword>
<keyword id="KW-0820">tRNA-binding</keyword>
<protein>
    <recommendedName>
        <fullName evidence="1">tRNA(Met) cytidine acetate ligase</fullName>
        <ecNumber evidence="1">6.3.4.-</ecNumber>
    </recommendedName>
</protein>